<protein>
    <recommendedName>
        <fullName evidence="1">DNA replication terminus site-binding protein</fullName>
        <shortName evidence="1">Ter-binding protein</shortName>
    </recommendedName>
</protein>
<proteinExistence type="inferred from homology"/>
<name>TUS_SHIDS</name>
<sequence length="309" mass="35678">MARYDLVDRLNTTFRQMEQELAAFAAHLEQHKLLVARVFSLPEVKKEDEHNPLNRIEVKQHLGNDAHSLALRHFRHLFIQQQSENRSSKAAVRLPGVLCYQVDNLSQAALVSHIQHINKLKTTFEHIVTVESELPTAARFEWVHRHLPGLITLNAYRSLTVLHDPATLRFGWANKHIIKNLHRDEVLAQLEKSLKSPRSVAPWTREEWQRKLEREYQGIAALPQNAKLKIKRPVKVQPIARVWYKGDQKQVQHACPTPLIALINRDNGAGVPDVGELLNYDADNVQHRYKPQAQPLRLIIPRLHLYVAD</sequence>
<keyword id="KW-0963">Cytoplasm</keyword>
<keyword id="KW-0235">DNA replication</keyword>
<keyword id="KW-0238">DNA-binding</keyword>
<keyword id="KW-1185">Reference proteome</keyword>
<accession>Q32FG8</accession>
<comment type="function">
    <text evidence="1">Trans-acting protein required for termination of DNA replication. Binds to DNA replication terminator sequences (terA to terF) to prevent the passage of replication forks. The termination efficiency will be affected by the affinity of this protein for the terminator sequence.</text>
</comment>
<comment type="subcellular location">
    <subcellularLocation>
        <location evidence="1">Cytoplasm</location>
    </subcellularLocation>
</comment>
<comment type="similarity">
    <text evidence="1">Belongs to the Tus family.</text>
</comment>
<reference key="1">
    <citation type="journal article" date="2005" name="Nucleic Acids Res.">
        <title>Genome dynamics and diversity of Shigella species, the etiologic agents of bacillary dysentery.</title>
        <authorList>
            <person name="Yang F."/>
            <person name="Yang J."/>
            <person name="Zhang X."/>
            <person name="Chen L."/>
            <person name="Jiang Y."/>
            <person name="Yan Y."/>
            <person name="Tang X."/>
            <person name="Wang J."/>
            <person name="Xiong Z."/>
            <person name="Dong J."/>
            <person name="Xue Y."/>
            <person name="Zhu Y."/>
            <person name="Xu X."/>
            <person name="Sun L."/>
            <person name="Chen S."/>
            <person name="Nie H."/>
            <person name="Peng J."/>
            <person name="Xu J."/>
            <person name="Wang Y."/>
            <person name="Yuan Z."/>
            <person name="Wen Y."/>
            <person name="Yao Z."/>
            <person name="Shen Y."/>
            <person name="Qiang B."/>
            <person name="Hou Y."/>
            <person name="Yu J."/>
            <person name="Jin Q."/>
        </authorList>
    </citation>
    <scope>NUCLEOTIDE SEQUENCE [LARGE SCALE GENOMIC DNA]</scope>
    <source>
        <strain>Sd197</strain>
    </source>
</reference>
<evidence type="ECO:0000255" key="1">
    <source>
        <dbReference type="HAMAP-Rule" id="MF_00483"/>
    </source>
</evidence>
<dbReference type="EMBL" id="CP000034">
    <property type="protein sequence ID" value="ABB61937.1"/>
    <property type="molecule type" value="Genomic_DNA"/>
</dbReference>
<dbReference type="RefSeq" id="WP_005022373.1">
    <property type="nucleotide sequence ID" value="NC_007606.1"/>
</dbReference>
<dbReference type="RefSeq" id="YP_403428.1">
    <property type="nucleotide sequence ID" value="NC_007606.1"/>
</dbReference>
<dbReference type="SMR" id="Q32FG8"/>
<dbReference type="STRING" id="300267.SDY_1826"/>
<dbReference type="EnsemblBacteria" id="ABB61937">
    <property type="protein sequence ID" value="ABB61937"/>
    <property type="gene ID" value="SDY_1826"/>
</dbReference>
<dbReference type="KEGG" id="sdy:SDY_1826"/>
<dbReference type="PATRIC" id="fig|300267.13.peg.2199"/>
<dbReference type="HOGENOM" id="CLU_078181_0_0_6"/>
<dbReference type="Proteomes" id="UP000002716">
    <property type="component" value="Chromosome"/>
</dbReference>
<dbReference type="GO" id="GO:0005737">
    <property type="term" value="C:cytoplasm"/>
    <property type="evidence" value="ECO:0007669"/>
    <property type="project" value="UniProtKB-SubCell"/>
</dbReference>
<dbReference type="GO" id="GO:0003677">
    <property type="term" value="F:DNA binding"/>
    <property type="evidence" value="ECO:0007669"/>
    <property type="project" value="UniProtKB-UniRule"/>
</dbReference>
<dbReference type="GO" id="GO:0006274">
    <property type="term" value="P:DNA replication termination"/>
    <property type="evidence" value="ECO:0007669"/>
    <property type="project" value="UniProtKB-UniRule"/>
</dbReference>
<dbReference type="Gene3D" id="3.30.54.10">
    <property type="match status" value="1"/>
</dbReference>
<dbReference type="Gene3D" id="3.50.14.10">
    <property type="entry name" value="Replication terminator Tus, domain 1 superfamily/Replication terminator Tus"/>
    <property type="match status" value="1"/>
</dbReference>
<dbReference type="HAMAP" id="MF_00483">
    <property type="entry name" value="Rep_term_Tus"/>
    <property type="match status" value="1"/>
</dbReference>
<dbReference type="InterPro" id="IPR008865">
    <property type="entry name" value="DNA_replication_term_site-bd"/>
</dbReference>
<dbReference type="InterPro" id="IPR036381">
    <property type="entry name" value="Tus_dom1"/>
</dbReference>
<dbReference type="InterPro" id="IPR036384">
    <property type="entry name" value="Tus_sf"/>
</dbReference>
<dbReference type="NCBIfam" id="TIGR02648">
    <property type="entry name" value="rep_term_tus"/>
    <property type="match status" value="1"/>
</dbReference>
<dbReference type="Pfam" id="PF05472">
    <property type="entry name" value="Ter"/>
    <property type="match status" value="1"/>
</dbReference>
<dbReference type="SUPFAM" id="SSF56596">
    <property type="entry name" value="Replication terminator protein (Tus)"/>
    <property type="match status" value="1"/>
</dbReference>
<organism>
    <name type="scientific">Shigella dysenteriae serotype 1 (strain Sd197)</name>
    <dbReference type="NCBI Taxonomy" id="300267"/>
    <lineage>
        <taxon>Bacteria</taxon>
        <taxon>Pseudomonadati</taxon>
        <taxon>Pseudomonadota</taxon>
        <taxon>Gammaproteobacteria</taxon>
        <taxon>Enterobacterales</taxon>
        <taxon>Enterobacteriaceae</taxon>
        <taxon>Shigella</taxon>
    </lineage>
</organism>
<gene>
    <name evidence="1" type="primary">tus</name>
    <name type="ordered locus">SDY_1826</name>
</gene>
<feature type="chain" id="PRO_0000049422" description="DNA replication terminus site-binding protein">
    <location>
        <begin position="1"/>
        <end position="309"/>
    </location>
</feature>